<comment type="similarity">
    <text evidence="1">Belongs to the DNA glycosylase MPG family.</text>
</comment>
<organism>
    <name type="scientific">Borrelia garinii subsp. bavariensis (strain ATCC BAA-2496 / DSM 23469 / PBi)</name>
    <name type="common">Borreliella bavariensis</name>
    <dbReference type="NCBI Taxonomy" id="290434"/>
    <lineage>
        <taxon>Bacteria</taxon>
        <taxon>Pseudomonadati</taxon>
        <taxon>Spirochaetota</taxon>
        <taxon>Spirochaetia</taxon>
        <taxon>Spirochaetales</taxon>
        <taxon>Borreliaceae</taxon>
        <taxon>Borreliella</taxon>
    </lineage>
</organism>
<gene>
    <name type="ordered locus">BG0429</name>
</gene>
<dbReference type="EC" id="3.2.2.-" evidence="1"/>
<dbReference type="EMBL" id="CP000013">
    <property type="protein sequence ID" value="AAU07275.1"/>
    <property type="molecule type" value="Genomic_DNA"/>
</dbReference>
<dbReference type="RefSeq" id="WP_011193747.1">
    <property type="nucleotide sequence ID" value="NZ_CP028872.1"/>
</dbReference>
<dbReference type="SMR" id="Q661J6"/>
<dbReference type="GeneID" id="45161214"/>
<dbReference type="KEGG" id="bga:BG0429"/>
<dbReference type="eggNOG" id="COG2094">
    <property type="taxonomic scope" value="Bacteria"/>
</dbReference>
<dbReference type="HOGENOM" id="CLU_060471_0_2_12"/>
<dbReference type="OrthoDB" id="9794313at2"/>
<dbReference type="Proteomes" id="UP000002276">
    <property type="component" value="Chromosome"/>
</dbReference>
<dbReference type="GO" id="GO:0003905">
    <property type="term" value="F:alkylbase DNA N-glycosylase activity"/>
    <property type="evidence" value="ECO:0007669"/>
    <property type="project" value="InterPro"/>
</dbReference>
<dbReference type="GO" id="GO:0003677">
    <property type="term" value="F:DNA binding"/>
    <property type="evidence" value="ECO:0007669"/>
    <property type="project" value="InterPro"/>
</dbReference>
<dbReference type="GO" id="GO:0006284">
    <property type="term" value="P:base-excision repair"/>
    <property type="evidence" value="ECO:0007669"/>
    <property type="project" value="InterPro"/>
</dbReference>
<dbReference type="CDD" id="cd00540">
    <property type="entry name" value="AAG"/>
    <property type="match status" value="1"/>
</dbReference>
<dbReference type="FunFam" id="3.10.300.10:FF:000001">
    <property type="entry name" value="Putative 3-methyladenine DNA glycosylase"/>
    <property type="match status" value="1"/>
</dbReference>
<dbReference type="Gene3D" id="3.10.300.10">
    <property type="entry name" value="Methylpurine-DNA glycosylase (MPG)"/>
    <property type="match status" value="1"/>
</dbReference>
<dbReference type="HAMAP" id="MF_00527">
    <property type="entry name" value="3MGH"/>
    <property type="match status" value="1"/>
</dbReference>
<dbReference type="InterPro" id="IPR011034">
    <property type="entry name" value="Formyl_transferase-like_C_sf"/>
</dbReference>
<dbReference type="InterPro" id="IPR003180">
    <property type="entry name" value="MPG"/>
</dbReference>
<dbReference type="InterPro" id="IPR036995">
    <property type="entry name" value="MPG_sf"/>
</dbReference>
<dbReference type="NCBIfam" id="TIGR00567">
    <property type="entry name" value="3mg"/>
    <property type="match status" value="1"/>
</dbReference>
<dbReference type="PANTHER" id="PTHR10429">
    <property type="entry name" value="DNA-3-METHYLADENINE GLYCOSYLASE"/>
    <property type="match status" value="1"/>
</dbReference>
<dbReference type="PANTHER" id="PTHR10429:SF0">
    <property type="entry name" value="DNA-3-METHYLADENINE GLYCOSYLASE"/>
    <property type="match status" value="1"/>
</dbReference>
<dbReference type="Pfam" id="PF02245">
    <property type="entry name" value="Pur_DNA_glyco"/>
    <property type="match status" value="1"/>
</dbReference>
<dbReference type="SUPFAM" id="SSF50486">
    <property type="entry name" value="FMT C-terminal domain-like"/>
    <property type="match status" value="1"/>
</dbReference>
<accession>Q661J6</accession>
<proteinExistence type="inferred from homology"/>
<keyword id="KW-0227">DNA damage</keyword>
<keyword id="KW-0234">DNA repair</keyword>
<keyword id="KW-0378">Hydrolase</keyword>
<feature type="chain" id="PRO_0000265001" description="Putative 3-methyladenine DNA glycosylase">
    <location>
        <begin position="1"/>
        <end position="186"/>
    </location>
</feature>
<evidence type="ECO:0000255" key="1">
    <source>
        <dbReference type="HAMAP-Rule" id="MF_00527"/>
    </source>
</evidence>
<reference key="1">
    <citation type="journal article" date="2004" name="Nucleic Acids Res.">
        <title>Comparative analysis of the Borrelia garinii genome.</title>
        <authorList>
            <person name="Gloeckner G."/>
            <person name="Lehmann R."/>
            <person name="Romualdi A."/>
            <person name="Pradella S."/>
            <person name="Schulte-Spechtel U."/>
            <person name="Schilhabel M."/>
            <person name="Wilske B."/>
            <person name="Suehnel J."/>
            <person name="Platzer M."/>
        </authorList>
    </citation>
    <scope>NUCLEOTIDE SEQUENCE [LARGE SCALE GENOMIC DNA]</scope>
    <source>
        <strain>ATCC BAA-2496 / DSM 23469 / PBi</strain>
    </source>
</reference>
<name>3MGH_BORGP</name>
<sequence length="186" mass="21424">MDRYFFLQDATTVARLLLGNLLIRKINKKEIVARIVETEAYMGIADSACHSYGGKRTNRTNAMYSIGGYSYVYMIYGMHYMFNVVTADKNNPQAVLIRSIEPISPLLGKKSALTNGPGKLTKFLNIDLTFNKVDLIGNNELFLQRDLNLDFNIVCSKRININYAQEDDINKLWRFYIKDNKFVSRR</sequence>
<protein>
    <recommendedName>
        <fullName evidence="1">Putative 3-methyladenine DNA glycosylase</fullName>
        <ecNumber evidence="1">3.2.2.-</ecNumber>
    </recommendedName>
</protein>